<reference key="1">
    <citation type="journal article" date="1996" name="DNA Res.">
        <title>Sequence analysis of the genome of the unicellular cyanobacterium Synechocystis sp. strain PCC6803. II. Sequence determination of the entire genome and assignment of potential protein-coding regions.</title>
        <authorList>
            <person name="Kaneko T."/>
            <person name="Sato S."/>
            <person name="Kotani H."/>
            <person name="Tanaka A."/>
            <person name="Asamizu E."/>
            <person name="Nakamura Y."/>
            <person name="Miyajima N."/>
            <person name="Hirosawa M."/>
            <person name="Sugiura M."/>
            <person name="Sasamoto S."/>
            <person name="Kimura T."/>
            <person name="Hosouchi T."/>
            <person name="Matsuno A."/>
            <person name="Muraki A."/>
            <person name="Nakazaki N."/>
            <person name="Naruo K."/>
            <person name="Okumura S."/>
            <person name="Shimpo S."/>
            <person name="Takeuchi C."/>
            <person name="Wada T."/>
            <person name="Watanabe A."/>
            <person name="Yamada M."/>
            <person name="Yasuda M."/>
            <person name="Tabata S."/>
        </authorList>
    </citation>
    <scope>NUCLEOTIDE SEQUENCE [LARGE SCALE GENOMIC DNA]</scope>
    <source>
        <strain>ATCC 27184 / PCC 6803 / Kazusa</strain>
    </source>
</reference>
<name>Y1374_SYNY3</name>
<sequence>MSQSLSAEKLHFTTKLAYGAGDFGPAITANILVFYLLFFLTDVAGIPAALAGSVLMIGKIFDAINDPIIGLLSDRTRSRWGRRLPWMLGGMIPFALFYTAQWLIPHFSDDRLTNQWGLFIYYVAIAMAFNLCYTTVNLPYTALTPELTQNYNERTRLNSFRFAFSIGGSILSLILYILIAAGLPDRPQQQFGELGVMISVLSISALLWSALRLQEKGKEPILSPSLRRRLAPLLMAAGITLILLAIAKSFNLLGGSGFDYISFFLILLGLIWGGFGFTLRDSAVEEHLQKLENSPSPGVTENLPLLKQLKIAFSNRAFLFVIGIYLCSWLAVQLTASILVYFVVSWMGLNEQQSGTIALAVQGTALVMLFVWQALAQFLDKKVIYFLGSMVWMGAEAGLWLVQPGQVALLYTLAIFAGVGVSVAYLIPWSMIPDVVDLDELNTGKRREGFFYAFMVLLQKVGLALGLFLVGLTLEASGFIARIPGEPIPIQPDSALWAIRFAVAPLPAFFLLGGLILAIFYPITRAVHTDIRQQLQARQQNNHI</sequence>
<feature type="chain" id="PRO_0000170773" description="Uncharacterized symporter sll1374">
    <location>
        <begin position="1"/>
        <end position="544"/>
    </location>
</feature>
<feature type="transmembrane region" description="Helical" evidence="1">
    <location>
        <begin position="31"/>
        <end position="51"/>
    </location>
</feature>
<feature type="transmembrane region" description="Helical" evidence="1">
    <location>
        <begin position="52"/>
        <end position="72"/>
    </location>
</feature>
<feature type="transmembrane region" description="Helical" evidence="1">
    <location>
        <begin position="84"/>
        <end position="104"/>
    </location>
</feature>
<feature type="transmembrane region" description="Helical" evidence="1">
    <location>
        <begin position="116"/>
        <end position="136"/>
    </location>
</feature>
<feature type="transmembrane region" description="Helical" evidence="1">
    <location>
        <begin position="162"/>
        <end position="182"/>
    </location>
</feature>
<feature type="transmembrane region" description="Helical" evidence="1">
    <location>
        <begin position="191"/>
        <end position="211"/>
    </location>
</feature>
<feature type="transmembrane region" description="Helical" evidence="1">
    <location>
        <begin position="230"/>
        <end position="250"/>
    </location>
</feature>
<feature type="transmembrane region" description="Helical" evidence="1">
    <location>
        <begin position="257"/>
        <end position="277"/>
    </location>
</feature>
<feature type="transmembrane region" description="Helical" evidence="1">
    <location>
        <begin position="318"/>
        <end position="338"/>
    </location>
</feature>
<feature type="transmembrane region" description="Helical" evidence="1">
    <location>
        <begin position="356"/>
        <end position="376"/>
    </location>
</feature>
<feature type="transmembrane region" description="Helical" evidence="1">
    <location>
        <begin position="383"/>
        <end position="403"/>
    </location>
</feature>
<feature type="transmembrane region" description="Helical" evidence="1">
    <location>
        <begin position="407"/>
        <end position="427"/>
    </location>
</feature>
<feature type="transmembrane region" description="Helical" evidence="1">
    <location>
        <begin position="450"/>
        <end position="470"/>
    </location>
</feature>
<feature type="transmembrane region" description="Helical" evidence="1">
    <location>
        <begin position="501"/>
        <end position="521"/>
    </location>
</feature>
<organism>
    <name type="scientific">Synechocystis sp. (strain ATCC 27184 / PCC 6803 / Kazusa)</name>
    <dbReference type="NCBI Taxonomy" id="1111708"/>
    <lineage>
        <taxon>Bacteria</taxon>
        <taxon>Bacillati</taxon>
        <taxon>Cyanobacteriota</taxon>
        <taxon>Cyanophyceae</taxon>
        <taxon>Synechococcales</taxon>
        <taxon>Merismopediaceae</taxon>
        <taxon>Synechocystis</taxon>
    </lineage>
</organism>
<comment type="subcellular location">
    <subcellularLocation>
        <location evidence="2">Cell membrane</location>
        <topology evidence="2">Multi-pass membrane protein</topology>
    </subcellularLocation>
</comment>
<comment type="similarity">
    <text evidence="2">Belongs to the sodium:galactoside symporter (TC 2.A.2) family.</text>
</comment>
<gene>
    <name type="ordered locus">sll1374</name>
</gene>
<keyword id="KW-1003">Cell membrane</keyword>
<keyword id="KW-0472">Membrane</keyword>
<keyword id="KW-1185">Reference proteome</keyword>
<keyword id="KW-0769">Symport</keyword>
<keyword id="KW-0812">Transmembrane</keyword>
<keyword id="KW-1133">Transmembrane helix</keyword>
<keyword id="KW-0813">Transport</keyword>
<dbReference type="EMBL" id="BA000022">
    <property type="protein sequence ID" value="BAA18257.1"/>
    <property type="molecule type" value="Genomic_DNA"/>
</dbReference>
<dbReference type="PIR" id="S75696">
    <property type="entry name" value="S75696"/>
</dbReference>
<dbReference type="SMR" id="P74168"/>
<dbReference type="FunCoup" id="P74168">
    <property type="interactions" value="76"/>
</dbReference>
<dbReference type="STRING" id="1148.gene:10499133"/>
<dbReference type="PaxDb" id="1148-1653342"/>
<dbReference type="EnsemblBacteria" id="BAA18257">
    <property type="protein sequence ID" value="BAA18257"/>
    <property type="gene ID" value="BAA18257"/>
</dbReference>
<dbReference type="KEGG" id="syn:sll1374"/>
<dbReference type="eggNOG" id="COG2211">
    <property type="taxonomic scope" value="Bacteria"/>
</dbReference>
<dbReference type="InParanoid" id="P74168"/>
<dbReference type="PhylomeDB" id="P74168"/>
<dbReference type="Proteomes" id="UP000001425">
    <property type="component" value="Chromosome"/>
</dbReference>
<dbReference type="GO" id="GO:0005886">
    <property type="term" value="C:plasma membrane"/>
    <property type="evidence" value="ECO:0000318"/>
    <property type="project" value="GO_Central"/>
</dbReference>
<dbReference type="GO" id="GO:0015293">
    <property type="term" value="F:symporter activity"/>
    <property type="evidence" value="ECO:0007669"/>
    <property type="project" value="UniProtKB-KW"/>
</dbReference>
<dbReference type="GO" id="GO:0008643">
    <property type="term" value="P:carbohydrate transport"/>
    <property type="evidence" value="ECO:0007669"/>
    <property type="project" value="InterPro"/>
</dbReference>
<dbReference type="GO" id="GO:0006814">
    <property type="term" value="P:sodium ion transport"/>
    <property type="evidence" value="ECO:0007669"/>
    <property type="project" value="InterPro"/>
</dbReference>
<dbReference type="GO" id="GO:0055085">
    <property type="term" value="P:transmembrane transport"/>
    <property type="evidence" value="ECO:0000318"/>
    <property type="project" value="GO_Central"/>
</dbReference>
<dbReference type="CDD" id="cd17332">
    <property type="entry name" value="MFS_MelB_like"/>
    <property type="match status" value="1"/>
</dbReference>
<dbReference type="FunFam" id="1.20.1250.20:FF:000183">
    <property type="entry name" value="sodium-dependent lysophosphatidylcholine symporter 1 isoform X2"/>
    <property type="match status" value="1"/>
</dbReference>
<dbReference type="FunFam" id="1.20.1250.20:FF:000868">
    <property type="entry name" value="Uncharacterized symporter sll1374"/>
    <property type="match status" value="1"/>
</dbReference>
<dbReference type="Gene3D" id="1.20.1250.20">
    <property type="entry name" value="MFS general substrate transporter like domains"/>
    <property type="match status" value="2"/>
</dbReference>
<dbReference type="InterPro" id="IPR039672">
    <property type="entry name" value="MFS_2"/>
</dbReference>
<dbReference type="InterPro" id="IPR036259">
    <property type="entry name" value="MFS_trans_sf"/>
</dbReference>
<dbReference type="InterPro" id="IPR018043">
    <property type="entry name" value="Na/Gal_symport_CS"/>
</dbReference>
<dbReference type="PANTHER" id="PTHR11328:SF24">
    <property type="entry name" value="MAJOR FACILITATOR SUPERFAMILY (MFS) PROFILE DOMAIN-CONTAINING PROTEIN"/>
    <property type="match status" value="1"/>
</dbReference>
<dbReference type="PANTHER" id="PTHR11328">
    <property type="entry name" value="MAJOR FACILITATOR SUPERFAMILY DOMAIN-CONTAINING PROTEIN"/>
    <property type="match status" value="1"/>
</dbReference>
<dbReference type="Pfam" id="PF13347">
    <property type="entry name" value="MFS_2"/>
    <property type="match status" value="2"/>
</dbReference>
<dbReference type="SUPFAM" id="SSF103473">
    <property type="entry name" value="MFS general substrate transporter"/>
    <property type="match status" value="1"/>
</dbReference>
<dbReference type="PROSITE" id="PS00872">
    <property type="entry name" value="NA_GALACTOSIDE_SYMP"/>
    <property type="match status" value="1"/>
</dbReference>
<proteinExistence type="inferred from homology"/>
<protein>
    <recommendedName>
        <fullName>Uncharacterized symporter sll1374</fullName>
    </recommendedName>
</protein>
<accession>P74168</accession>
<evidence type="ECO:0000255" key="1"/>
<evidence type="ECO:0000305" key="2"/>